<dbReference type="EMBL" id="CP000563">
    <property type="protein sequence ID" value="ABN61656.1"/>
    <property type="molecule type" value="Genomic_DNA"/>
</dbReference>
<dbReference type="RefSeq" id="WP_011846839.1">
    <property type="nucleotide sequence ID" value="NC_009052.1"/>
</dbReference>
<dbReference type="SMR" id="A3D4J3"/>
<dbReference type="STRING" id="325240.Sbal_2159"/>
<dbReference type="KEGG" id="sbl:Sbal_2159"/>
<dbReference type="HOGENOM" id="CLU_114342_3_0_6"/>
<dbReference type="OrthoDB" id="9806299at2"/>
<dbReference type="Proteomes" id="UP000001557">
    <property type="component" value="Chromosome"/>
</dbReference>
<dbReference type="GO" id="GO:0005886">
    <property type="term" value="C:plasma membrane"/>
    <property type="evidence" value="ECO:0007669"/>
    <property type="project" value="UniProtKB-SubCell"/>
</dbReference>
<dbReference type="GO" id="GO:0062054">
    <property type="term" value="F:fluoride channel activity"/>
    <property type="evidence" value="ECO:0007669"/>
    <property type="project" value="UniProtKB-UniRule"/>
</dbReference>
<dbReference type="GO" id="GO:0046872">
    <property type="term" value="F:metal ion binding"/>
    <property type="evidence" value="ECO:0007669"/>
    <property type="project" value="UniProtKB-KW"/>
</dbReference>
<dbReference type="GO" id="GO:0140114">
    <property type="term" value="P:cellular detoxification of fluoride"/>
    <property type="evidence" value="ECO:0007669"/>
    <property type="project" value="UniProtKB-UniRule"/>
</dbReference>
<dbReference type="HAMAP" id="MF_00454">
    <property type="entry name" value="FluC"/>
    <property type="match status" value="1"/>
</dbReference>
<dbReference type="InterPro" id="IPR003691">
    <property type="entry name" value="FluC"/>
</dbReference>
<dbReference type="NCBIfam" id="TIGR00494">
    <property type="entry name" value="crcB"/>
    <property type="match status" value="1"/>
</dbReference>
<dbReference type="PANTHER" id="PTHR28259">
    <property type="entry name" value="FLUORIDE EXPORT PROTEIN 1-RELATED"/>
    <property type="match status" value="1"/>
</dbReference>
<dbReference type="PANTHER" id="PTHR28259:SF1">
    <property type="entry name" value="FLUORIDE EXPORT PROTEIN 1-RELATED"/>
    <property type="match status" value="1"/>
</dbReference>
<dbReference type="Pfam" id="PF02537">
    <property type="entry name" value="CRCB"/>
    <property type="match status" value="1"/>
</dbReference>
<proteinExistence type="inferred from homology"/>
<name>FLUC_SHEB5</name>
<sequence length="124" mass="13484">MNNLLLVALGGSIGAVFRYLISIFMIQVFGSSFPFGTLLVNVLGSFLMGVIYALGQMSHISPEFKALIGIGLLGALTTFSTFSNETLLLLQEGDWLKATLNVVLNLSLCLFMVYLGQQLVFSRI</sequence>
<gene>
    <name evidence="1" type="primary">fluC</name>
    <name evidence="1" type="synonym">crcB</name>
    <name type="ordered locus">Sbal_2159</name>
</gene>
<protein>
    <recommendedName>
        <fullName evidence="1">Fluoride-specific ion channel FluC</fullName>
    </recommendedName>
</protein>
<keyword id="KW-0997">Cell inner membrane</keyword>
<keyword id="KW-1003">Cell membrane</keyword>
<keyword id="KW-0407">Ion channel</keyword>
<keyword id="KW-0406">Ion transport</keyword>
<keyword id="KW-0472">Membrane</keyword>
<keyword id="KW-0479">Metal-binding</keyword>
<keyword id="KW-1185">Reference proteome</keyword>
<keyword id="KW-0915">Sodium</keyword>
<keyword id="KW-0812">Transmembrane</keyword>
<keyword id="KW-1133">Transmembrane helix</keyword>
<keyword id="KW-0813">Transport</keyword>
<evidence type="ECO:0000255" key="1">
    <source>
        <dbReference type="HAMAP-Rule" id="MF_00454"/>
    </source>
</evidence>
<reference key="1">
    <citation type="submission" date="2007-02" db="EMBL/GenBank/DDBJ databases">
        <title>Complete sequence of chromosome of Shewanella baltica OS155.</title>
        <authorList>
            <consortium name="US DOE Joint Genome Institute"/>
            <person name="Copeland A."/>
            <person name="Lucas S."/>
            <person name="Lapidus A."/>
            <person name="Barry K."/>
            <person name="Detter J.C."/>
            <person name="Glavina del Rio T."/>
            <person name="Hammon N."/>
            <person name="Israni S."/>
            <person name="Dalin E."/>
            <person name="Tice H."/>
            <person name="Pitluck S."/>
            <person name="Sims D.R."/>
            <person name="Brettin T."/>
            <person name="Bruce D."/>
            <person name="Han C."/>
            <person name="Tapia R."/>
            <person name="Brainard J."/>
            <person name="Schmutz J."/>
            <person name="Larimer F."/>
            <person name="Land M."/>
            <person name="Hauser L."/>
            <person name="Kyrpides N."/>
            <person name="Mikhailova N."/>
            <person name="Brettar I."/>
            <person name="Klappenbach J."/>
            <person name="Konstantinidis K."/>
            <person name="Rodrigues J."/>
            <person name="Tiedje J."/>
            <person name="Richardson P."/>
        </authorList>
    </citation>
    <scope>NUCLEOTIDE SEQUENCE [LARGE SCALE GENOMIC DNA]</scope>
    <source>
        <strain>OS155 / ATCC BAA-1091</strain>
    </source>
</reference>
<feature type="chain" id="PRO_1000026413" description="Fluoride-specific ion channel FluC">
    <location>
        <begin position="1"/>
        <end position="124"/>
    </location>
</feature>
<feature type="transmembrane region" description="Helical" evidence="1">
    <location>
        <begin position="4"/>
        <end position="24"/>
    </location>
</feature>
<feature type="transmembrane region" description="Helical" evidence="1">
    <location>
        <begin position="35"/>
        <end position="55"/>
    </location>
</feature>
<feature type="transmembrane region" description="Helical" evidence="1">
    <location>
        <begin position="60"/>
        <end position="80"/>
    </location>
</feature>
<feature type="transmembrane region" description="Helical" evidence="1">
    <location>
        <begin position="102"/>
        <end position="122"/>
    </location>
</feature>
<feature type="binding site" evidence="1">
    <location>
        <position position="74"/>
    </location>
    <ligand>
        <name>Na(+)</name>
        <dbReference type="ChEBI" id="CHEBI:29101"/>
        <note>structural</note>
    </ligand>
</feature>
<feature type="binding site" evidence="1">
    <location>
        <position position="77"/>
    </location>
    <ligand>
        <name>Na(+)</name>
        <dbReference type="ChEBI" id="CHEBI:29101"/>
        <note>structural</note>
    </ligand>
</feature>
<accession>A3D4J3</accession>
<organism>
    <name type="scientific">Shewanella baltica (strain OS155 / ATCC BAA-1091)</name>
    <dbReference type="NCBI Taxonomy" id="325240"/>
    <lineage>
        <taxon>Bacteria</taxon>
        <taxon>Pseudomonadati</taxon>
        <taxon>Pseudomonadota</taxon>
        <taxon>Gammaproteobacteria</taxon>
        <taxon>Alteromonadales</taxon>
        <taxon>Shewanellaceae</taxon>
        <taxon>Shewanella</taxon>
    </lineage>
</organism>
<comment type="function">
    <text evidence="1">Fluoride-specific ion channel. Important for reducing fluoride concentration in the cell, thus reducing its toxicity.</text>
</comment>
<comment type="catalytic activity">
    <reaction evidence="1">
        <text>fluoride(in) = fluoride(out)</text>
        <dbReference type="Rhea" id="RHEA:76159"/>
        <dbReference type="ChEBI" id="CHEBI:17051"/>
    </reaction>
    <physiologicalReaction direction="left-to-right" evidence="1">
        <dbReference type="Rhea" id="RHEA:76160"/>
    </physiologicalReaction>
</comment>
<comment type="activity regulation">
    <text evidence="1">Na(+) is not transported, but it plays an essential structural role and its presence is essential for fluoride channel function.</text>
</comment>
<comment type="subcellular location">
    <subcellularLocation>
        <location evidence="1">Cell inner membrane</location>
        <topology evidence="1">Multi-pass membrane protein</topology>
    </subcellularLocation>
</comment>
<comment type="similarity">
    <text evidence="1">Belongs to the fluoride channel Fluc/FEX (TC 1.A.43) family.</text>
</comment>